<dbReference type="EC" id="4.7.1.1" evidence="1"/>
<dbReference type="EMBL" id="M96263">
    <property type="protein sequence ID" value="AAA26353.1"/>
    <property type="molecule type" value="Genomic_DNA"/>
</dbReference>
<dbReference type="EMBL" id="AL591985">
    <property type="protein sequence ID" value="CAC49854.1"/>
    <property type="molecule type" value="Genomic_DNA"/>
</dbReference>
<dbReference type="PIR" id="F96023">
    <property type="entry name" value="F96023"/>
</dbReference>
<dbReference type="RefSeq" id="NP_437994.1">
    <property type="nucleotide sequence ID" value="NC_003078.1"/>
</dbReference>
<dbReference type="RefSeq" id="WP_003530631.1">
    <property type="nucleotide sequence ID" value="NC_003078.1"/>
</dbReference>
<dbReference type="SMR" id="Q52987"/>
<dbReference type="EnsemblBacteria" id="CAC49854">
    <property type="protein sequence ID" value="CAC49854"/>
    <property type="gene ID" value="SM_b20762"/>
</dbReference>
<dbReference type="KEGG" id="sme:SM_b20762"/>
<dbReference type="PATRIC" id="fig|266834.11.peg.6380"/>
<dbReference type="eggNOG" id="COG3627">
    <property type="taxonomic scope" value="Bacteria"/>
</dbReference>
<dbReference type="HOGENOM" id="CLU_063386_0_0_5"/>
<dbReference type="OrthoDB" id="9803851at2"/>
<dbReference type="BioCyc" id="MetaCyc:MONOMER-19922"/>
<dbReference type="Proteomes" id="UP000001976">
    <property type="component" value="Plasmid pSymB"/>
</dbReference>
<dbReference type="GO" id="GO:0051539">
    <property type="term" value="F:4 iron, 4 sulfur cluster binding"/>
    <property type="evidence" value="ECO:0007669"/>
    <property type="project" value="UniProtKB-KW"/>
</dbReference>
<dbReference type="GO" id="GO:0098848">
    <property type="term" value="F:alpha-D-ribose 1-methylphosphonate 5-phosphate C-P-lyase activity"/>
    <property type="evidence" value="ECO:0007669"/>
    <property type="project" value="UniProtKB-EC"/>
</dbReference>
<dbReference type="GO" id="GO:0046872">
    <property type="term" value="F:metal ion binding"/>
    <property type="evidence" value="ECO:0007669"/>
    <property type="project" value="UniProtKB-KW"/>
</dbReference>
<dbReference type="GO" id="GO:0019700">
    <property type="term" value="P:organic phosphonate catabolic process"/>
    <property type="evidence" value="ECO:0007669"/>
    <property type="project" value="InterPro"/>
</dbReference>
<dbReference type="InterPro" id="IPR010306">
    <property type="entry name" value="PhnJ"/>
</dbReference>
<dbReference type="Pfam" id="PF06007">
    <property type="entry name" value="PhnJ"/>
    <property type="match status" value="1"/>
</dbReference>
<dbReference type="PIRSF" id="PIRSF011468">
    <property type="entry name" value="PhnJ"/>
    <property type="match status" value="1"/>
</dbReference>
<dbReference type="SFLD" id="SFLDF00379">
    <property type="entry name" value="Phosphonate_metabolism_(PhnJ)"/>
    <property type="match status" value="1"/>
</dbReference>
<dbReference type="SFLD" id="SFLDG01115">
    <property type="entry name" value="Phosphonate_metabolism_(PhnJ)"/>
    <property type="match status" value="1"/>
</dbReference>
<dbReference type="SFLD" id="SFLDS00033">
    <property type="entry name" value="Radical_SAM_Phosphonate_Metabo"/>
    <property type="match status" value="1"/>
</dbReference>
<comment type="function">
    <text evidence="1">Catalyzes the breakage of the C-P bond in alpha-D-ribose 1-methylphosphonate 5-phosphate (PRPn) forming alpha-D-ribose 1,2-cyclic phosphate 5-phosphate (PRcP).</text>
</comment>
<comment type="catalytic activity">
    <reaction evidence="1">
        <text>alpha-D-ribose 1-methylphosphonate 5-phosphate + AH2 + S-adenosyl-L-methionine = alpha-D-ribose 1,2-cyclic phosphate 5-phosphate + methane + 5'-deoxyadenosine + L-methionine + A + H(+)</text>
        <dbReference type="Rhea" id="RHEA:34707"/>
        <dbReference type="ChEBI" id="CHEBI:13193"/>
        <dbReference type="ChEBI" id="CHEBI:15378"/>
        <dbReference type="ChEBI" id="CHEBI:16183"/>
        <dbReference type="ChEBI" id="CHEBI:17319"/>
        <dbReference type="ChEBI" id="CHEBI:17499"/>
        <dbReference type="ChEBI" id="CHEBI:57844"/>
        <dbReference type="ChEBI" id="CHEBI:59789"/>
        <dbReference type="ChEBI" id="CHEBI:68686"/>
        <dbReference type="ChEBI" id="CHEBI:68687"/>
        <dbReference type="EC" id="4.7.1.1"/>
    </reaction>
</comment>
<comment type="cofactor">
    <cofactor evidence="1">
        <name>[4Fe-4S] cluster</name>
        <dbReference type="ChEBI" id="CHEBI:49883"/>
    </cofactor>
    <text evidence="1">Binds 1 [4Fe-4S] cluster per subunit.</text>
</comment>
<comment type="similarity">
    <text evidence="2">Belongs to the PhnJ family.</text>
</comment>
<protein>
    <recommendedName>
        <fullName>Alpha-D-ribose 1-methylphosphonate 5-phosphate C-P-lyase</fullName>
        <shortName>PRPn C-P lyase</shortName>
        <ecNumber evidence="1">4.7.1.1</ecNumber>
    </recommendedName>
</protein>
<keyword id="KW-0004">4Fe-4S</keyword>
<keyword id="KW-0408">Iron</keyword>
<keyword id="KW-0411">Iron-sulfur</keyword>
<keyword id="KW-0456">Lyase</keyword>
<keyword id="KW-0479">Metal-binding</keyword>
<keyword id="KW-0614">Plasmid</keyword>
<keyword id="KW-1185">Reference proteome</keyword>
<keyword id="KW-0949">S-adenosyl-L-methionine</keyword>
<geneLocation type="plasmid">
    <name>pSymB</name>
    <name>megaplasmid 2</name>
</geneLocation>
<evidence type="ECO:0000250" key="1">
    <source>
        <dbReference type="UniProtKB" id="P16688"/>
    </source>
</evidence>
<evidence type="ECO:0000305" key="2"/>
<feature type="chain" id="PRO_0000058398" description="Alpha-D-ribose 1-methylphosphonate 5-phosphate C-P-lyase">
    <location>
        <begin position="1"/>
        <end position="297"/>
    </location>
</feature>
<sequence length="297" mass="33383">MNDLATYNFAYLDEQTKRMIRRAILKAIAIPGYQVPFASREMPMPYGWGTGGVQVTASILGPDDVLKVIDQGADDTTNAVSIRAFFQKVADVAVTTRTTEATIIQTRHRIPEEQLREGQTLVYQVPIPEPLRFLEPRETETRKMHALEEYGLMHVKLYEDIARNGHIATTYAYPVKVEGRYVMDPSPTPKFDNPKMHMSEALQLFGAGREKRIYAVPPYTEVVSLDFEDHPFEVQKFDKPCALCGAENVYLDEVVLDDKGGRMFVCSDTDHCEDRRAHGHAGAMLAPAAKESQEAAE</sequence>
<gene>
    <name type="primary">phnJ</name>
    <name type="ordered locus">RB1454</name>
    <name type="ORF">SMb20762</name>
</gene>
<reference key="1">
    <citation type="submission" date="1992-11" db="EMBL/GenBank/DDBJ databases">
        <title>Characterization of a gene cluster involved in utilization of glyphosate and other phosphonates in Rhizobium meliloti.</title>
        <authorList>
            <person name="McLean P.A."/>
            <person name="Liu C.M."/>
            <person name="Sookdeo C.C."/>
            <person name="Cannon F.C."/>
        </authorList>
    </citation>
    <scope>NUCLEOTIDE SEQUENCE [GENOMIC DNA]</scope>
    <source>
        <strain>1021</strain>
    </source>
</reference>
<reference key="2">
    <citation type="journal article" date="2001" name="Proc. Natl. Acad. Sci. U.S.A.">
        <title>The complete sequence of the 1,683-kb pSymB megaplasmid from the N2-fixing endosymbiont Sinorhizobium meliloti.</title>
        <authorList>
            <person name="Finan T.M."/>
            <person name="Weidner S."/>
            <person name="Wong K."/>
            <person name="Buhrmester J."/>
            <person name="Chain P."/>
            <person name="Vorhoelter F.J."/>
            <person name="Hernandez-Lucas I."/>
            <person name="Becker A."/>
            <person name="Cowie A."/>
            <person name="Gouzy J."/>
            <person name="Golding B."/>
            <person name="Puehler A."/>
        </authorList>
    </citation>
    <scope>NUCLEOTIDE SEQUENCE [LARGE SCALE GENOMIC DNA]</scope>
    <source>
        <strain>1021</strain>
    </source>
</reference>
<reference key="3">
    <citation type="journal article" date="2001" name="Science">
        <title>The composite genome of the legume symbiont Sinorhizobium meliloti.</title>
        <authorList>
            <person name="Galibert F."/>
            <person name="Finan T.M."/>
            <person name="Long S.R."/>
            <person name="Puehler A."/>
            <person name="Abola P."/>
            <person name="Ampe F."/>
            <person name="Barloy-Hubler F."/>
            <person name="Barnett M.J."/>
            <person name="Becker A."/>
            <person name="Boistard P."/>
            <person name="Bothe G."/>
            <person name="Boutry M."/>
            <person name="Bowser L."/>
            <person name="Buhrmester J."/>
            <person name="Cadieu E."/>
            <person name="Capela D."/>
            <person name="Chain P."/>
            <person name="Cowie A."/>
            <person name="Davis R.W."/>
            <person name="Dreano S."/>
            <person name="Federspiel N.A."/>
            <person name="Fisher R.F."/>
            <person name="Gloux S."/>
            <person name="Godrie T."/>
            <person name="Goffeau A."/>
            <person name="Golding B."/>
            <person name="Gouzy J."/>
            <person name="Gurjal M."/>
            <person name="Hernandez-Lucas I."/>
            <person name="Hong A."/>
            <person name="Huizar L."/>
            <person name="Hyman R.W."/>
            <person name="Jones T."/>
            <person name="Kahn D."/>
            <person name="Kahn M.L."/>
            <person name="Kalman S."/>
            <person name="Keating D.H."/>
            <person name="Kiss E."/>
            <person name="Komp C."/>
            <person name="Lelaure V."/>
            <person name="Masuy D."/>
            <person name="Palm C."/>
            <person name="Peck M.C."/>
            <person name="Pohl T.M."/>
            <person name="Portetelle D."/>
            <person name="Purnelle B."/>
            <person name="Ramsperger U."/>
            <person name="Surzycki R."/>
            <person name="Thebault P."/>
            <person name="Vandenbol M."/>
            <person name="Vorhoelter F.J."/>
            <person name="Weidner S."/>
            <person name="Wells D.H."/>
            <person name="Wong K."/>
            <person name="Yeh K.-C."/>
            <person name="Batut J."/>
        </authorList>
    </citation>
    <scope>NUCLEOTIDE SEQUENCE [LARGE SCALE GENOMIC DNA]</scope>
    <source>
        <strain>1021</strain>
    </source>
</reference>
<name>PHNJ_RHIME</name>
<organism>
    <name type="scientific">Rhizobium meliloti (strain 1021)</name>
    <name type="common">Ensifer meliloti</name>
    <name type="synonym">Sinorhizobium meliloti</name>
    <dbReference type="NCBI Taxonomy" id="266834"/>
    <lineage>
        <taxon>Bacteria</taxon>
        <taxon>Pseudomonadati</taxon>
        <taxon>Pseudomonadota</taxon>
        <taxon>Alphaproteobacteria</taxon>
        <taxon>Hyphomicrobiales</taxon>
        <taxon>Rhizobiaceae</taxon>
        <taxon>Sinorhizobium/Ensifer group</taxon>
        <taxon>Sinorhizobium</taxon>
    </lineage>
</organism>
<proteinExistence type="inferred from homology"/>
<accession>Q52987</accession>